<evidence type="ECO:0000255" key="1">
    <source>
        <dbReference type="HAMAP-Rule" id="MF_01176"/>
    </source>
</evidence>
<feature type="chain" id="PRO_1000085421" description="HTH-type transcriptional regulator IscR">
    <location>
        <begin position="1"/>
        <end position="163"/>
    </location>
</feature>
<feature type="domain" description="HTH rrf2-type" evidence="1">
    <location>
        <begin position="2"/>
        <end position="131"/>
    </location>
</feature>
<feature type="DNA-binding region" description="H-T-H motif" evidence="1">
    <location>
        <begin position="28"/>
        <end position="51"/>
    </location>
</feature>
<feature type="binding site" evidence="1">
    <location>
        <position position="92"/>
    </location>
    <ligand>
        <name>[2Fe-2S] cluster</name>
        <dbReference type="ChEBI" id="CHEBI:190135"/>
    </ligand>
</feature>
<feature type="binding site" evidence="1">
    <location>
        <position position="98"/>
    </location>
    <ligand>
        <name>[2Fe-2S] cluster</name>
        <dbReference type="ChEBI" id="CHEBI:190135"/>
    </ligand>
</feature>
<feature type="binding site" evidence="1">
    <location>
        <position position="104"/>
    </location>
    <ligand>
        <name>[2Fe-2S] cluster</name>
        <dbReference type="ChEBI" id="CHEBI:190135"/>
    </ligand>
</feature>
<accession>A6TCF2</accession>
<comment type="function">
    <text evidence="1">Regulates the transcription of several operons and genes involved in the biogenesis of Fe-S clusters and Fe-S-containing proteins.</text>
</comment>
<comment type="cofactor">
    <cofactor evidence="1">
        <name>[2Fe-2S] cluster</name>
        <dbReference type="ChEBI" id="CHEBI:190135"/>
    </cofactor>
    <text evidence="1">Binds 1 [2Fe-2S] cluster.</text>
</comment>
<dbReference type="EMBL" id="CP000647">
    <property type="protein sequence ID" value="ABR78273.1"/>
    <property type="molecule type" value="Genomic_DNA"/>
</dbReference>
<dbReference type="RefSeq" id="WP_002913993.1">
    <property type="nucleotide sequence ID" value="NC_009648.1"/>
</dbReference>
<dbReference type="SMR" id="A6TCF2"/>
<dbReference type="STRING" id="272620.KPN_02863"/>
<dbReference type="jPOST" id="A6TCF2"/>
<dbReference type="PaxDb" id="272620-KPN_02863"/>
<dbReference type="EnsemblBacteria" id="ABR78273">
    <property type="protein sequence ID" value="ABR78273"/>
    <property type="gene ID" value="KPN_02863"/>
</dbReference>
<dbReference type="GeneID" id="93250159"/>
<dbReference type="KEGG" id="kpn:KPN_02863"/>
<dbReference type="HOGENOM" id="CLU_107144_0_0_6"/>
<dbReference type="Proteomes" id="UP000000265">
    <property type="component" value="Chromosome"/>
</dbReference>
<dbReference type="GO" id="GO:0005829">
    <property type="term" value="C:cytosol"/>
    <property type="evidence" value="ECO:0007669"/>
    <property type="project" value="TreeGrafter"/>
</dbReference>
<dbReference type="GO" id="GO:0051537">
    <property type="term" value="F:2 iron, 2 sulfur cluster binding"/>
    <property type="evidence" value="ECO:0007669"/>
    <property type="project" value="UniProtKB-KW"/>
</dbReference>
<dbReference type="GO" id="GO:0003700">
    <property type="term" value="F:DNA-binding transcription factor activity"/>
    <property type="evidence" value="ECO:0007669"/>
    <property type="project" value="UniProtKB-UniRule"/>
</dbReference>
<dbReference type="GO" id="GO:0003690">
    <property type="term" value="F:double-stranded DNA binding"/>
    <property type="evidence" value="ECO:0007669"/>
    <property type="project" value="UniProtKB-UniRule"/>
</dbReference>
<dbReference type="GO" id="GO:0005506">
    <property type="term" value="F:iron ion binding"/>
    <property type="evidence" value="ECO:0007669"/>
    <property type="project" value="UniProtKB-UniRule"/>
</dbReference>
<dbReference type="FunFam" id="1.10.10.10:FF:000026">
    <property type="entry name" value="HTH-type transcriptional regulator IscR"/>
    <property type="match status" value="1"/>
</dbReference>
<dbReference type="Gene3D" id="1.10.10.10">
    <property type="entry name" value="Winged helix-like DNA-binding domain superfamily/Winged helix DNA-binding domain"/>
    <property type="match status" value="1"/>
</dbReference>
<dbReference type="HAMAP" id="MF_01176">
    <property type="entry name" value="HTH_type_IscR"/>
    <property type="match status" value="1"/>
</dbReference>
<dbReference type="InterPro" id="IPR010242">
    <property type="entry name" value="TF_HTH_IscR"/>
</dbReference>
<dbReference type="InterPro" id="IPR030489">
    <property type="entry name" value="TR_Rrf2-type_CS"/>
</dbReference>
<dbReference type="InterPro" id="IPR000944">
    <property type="entry name" value="Tscrpt_reg_Rrf2"/>
</dbReference>
<dbReference type="InterPro" id="IPR036388">
    <property type="entry name" value="WH-like_DNA-bd_sf"/>
</dbReference>
<dbReference type="InterPro" id="IPR036390">
    <property type="entry name" value="WH_DNA-bd_sf"/>
</dbReference>
<dbReference type="NCBIfam" id="TIGR02010">
    <property type="entry name" value="IscR"/>
    <property type="match status" value="1"/>
</dbReference>
<dbReference type="NCBIfam" id="NF008110">
    <property type="entry name" value="PRK10857.1"/>
    <property type="match status" value="1"/>
</dbReference>
<dbReference type="NCBIfam" id="TIGR00738">
    <property type="entry name" value="rrf2_super"/>
    <property type="match status" value="1"/>
</dbReference>
<dbReference type="PANTHER" id="PTHR33221:SF5">
    <property type="entry name" value="HTH-TYPE TRANSCRIPTIONAL REGULATOR ISCR"/>
    <property type="match status" value="1"/>
</dbReference>
<dbReference type="PANTHER" id="PTHR33221">
    <property type="entry name" value="WINGED HELIX-TURN-HELIX TRANSCRIPTIONAL REGULATOR, RRF2 FAMILY"/>
    <property type="match status" value="1"/>
</dbReference>
<dbReference type="Pfam" id="PF02082">
    <property type="entry name" value="Rrf2"/>
    <property type="match status" value="1"/>
</dbReference>
<dbReference type="SUPFAM" id="SSF46785">
    <property type="entry name" value="Winged helix' DNA-binding domain"/>
    <property type="match status" value="1"/>
</dbReference>
<dbReference type="PROSITE" id="PS01332">
    <property type="entry name" value="HTH_RRF2_1"/>
    <property type="match status" value="1"/>
</dbReference>
<dbReference type="PROSITE" id="PS51197">
    <property type="entry name" value="HTH_RRF2_2"/>
    <property type="match status" value="1"/>
</dbReference>
<gene>
    <name evidence="1" type="primary">iscR</name>
    <name type="ordered locus">KPN78578_28120</name>
    <name type="ORF">KPN_02863</name>
</gene>
<reference key="1">
    <citation type="submission" date="2006-09" db="EMBL/GenBank/DDBJ databases">
        <authorList>
            <consortium name="The Klebsiella pneumonia Genome Sequencing Project"/>
            <person name="McClelland M."/>
            <person name="Sanderson E.K."/>
            <person name="Spieth J."/>
            <person name="Clifton W.S."/>
            <person name="Latreille P."/>
            <person name="Sabo A."/>
            <person name="Pepin K."/>
            <person name="Bhonagiri V."/>
            <person name="Porwollik S."/>
            <person name="Ali J."/>
            <person name="Wilson R.K."/>
        </authorList>
    </citation>
    <scope>NUCLEOTIDE SEQUENCE [LARGE SCALE GENOMIC DNA]</scope>
    <source>
        <strain>ATCC 700721 / MGH 78578</strain>
    </source>
</reference>
<sequence>MRLTSKGRYAVTAMLDVALNSETGPVPLADISERQGISLSYLEQLFSRLRKNGLVSSVRGPGGGYLLGKDAGSIAVGEVISAVDESVDATRCQGKGGCQGGDKCLTHALWRDLSERLTGFLNNITLGELVNNQEILDVSGRQHQHETQRNARTQDAIDVKLRA</sequence>
<organism>
    <name type="scientific">Klebsiella pneumoniae subsp. pneumoniae (strain ATCC 700721 / MGH 78578)</name>
    <dbReference type="NCBI Taxonomy" id="272620"/>
    <lineage>
        <taxon>Bacteria</taxon>
        <taxon>Pseudomonadati</taxon>
        <taxon>Pseudomonadota</taxon>
        <taxon>Gammaproteobacteria</taxon>
        <taxon>Enterobacterales</taxon>
        <taxon>Enterobacteriaceae</taxon>
        <taxon>Klebsiella/Raoultella group</taxon>
        <taxon>Klebsiella</taxon>
        <taxon>Klebsiella pneumoniae complex</taxon>
    </lineage>
</organism>
<proteinExistence type="inferred from homology"/>
<protein>
    <recommendedName>
        <fullName evidence="1">HTH-type transcriptional regulator IscR</fullName>
    </recommendedName>
</protein>
<keyword id="KW-0001">2Fe-2S</keyword>
<keyword id="KW-0010">Activator</keyword>
<keyword id="KW-0238">DNA-binding</keyword>
<keyword id="KW-0408">Iron</keyword>
<keyword id="KW-0411">Iron-sulfur</keyword>
<keyword id="KW-0479">Metal-binding</keyword>
<keyword id="KW-0678">Repressor</keyword>
<keyword id="KW-0804">Transcription</keyword>
<keyword id="KW-0805">Transcription regulation</keyword>
<name>ISCR_KLEP7</name>